<reference key="1">
    <citation type="submission" date="2007-11" db="EMBL/GenBank/DDBJ databases">
        <authorList>
            <consortium name="The Salmonella enterica serovar Arizonae Genome Sequencing Project"/>
            <person name="McClelland M."/>
            <person name="Sanderson E.K."/>
            <person name="Porwollik S."/>
            <person name="Spieth J."/>
            <person name="Clifton W.S."/>
            <person name="Fulton R."/>
            <person name="Chunyan W."/>
            <person name="Wollam A."/>
            <person name="Shah N."/>
            <person name="Pepin K."/>
            <person name="Bhonagiri V."/>
            <person name="Nash W."/>
            <person name="Johnson M."/>
            <person name="Thiruvilangam P."/>
            <person name="Wilson R."/>
        </authorList>
    </citation>
    <scope>NUCLEOTIDE SEQUENCE [LARGE SCALE GENOMIC DNA]</scope>
    <source>
        <strain>ATCC BAA-731 / CDC346-86 / RSK2980</strain>
    </source>
</reference>
<evidence type="ECO:0000255" key="1">
    <source>
        <dbReference type="HAMAP-Rule" id="MF_00229"/>
    </source>
</evidence>
<sequence>MNIITLTPGQLSLSQLHDIWRHPVQICLDASAIDSINASVACVNDIVAEGRTAYGINTGFGLLAQTRIADEDLQNLQRSLVLSHAAGVGDPLDDAMVRLIMVLKINSLARGFSGIRLSVIEALIALVNAGVYPLIPAKGSVGASGDLAPLAHLSLTLLGEGKARWQGEWLPAQTALKKAGLEPVALAAKEGLALLNGTQASTAFALRGLFEAQELFASAVVCGALTTEAVLGSRRPFDARIHAARGQQGQIDAARLFRHLLTETSAIAESHHHCNKVQDPYSLRCQPQVMGACLTQLRQTKEVLLVEANAVSDNPLVFADAGEVISGGNFHAEPVAMAADNLALAIAEIGALSERRIALMMDKHMSQLPPFLVKNGGVNSGFMIAQVTAAALASENKALAHPHSVDSLPTSANQEDHVSMAPAAGRRLWEMAANTRGVIAVEWLAACQGIDLREGLTSSPLLEQARQALREQVAHYTQDRFFAPDIACATALLAQGALQRLVPDFM</sequence>
<dbReference type="EC" id="4.3.1.3" evidence="1"/>
<dbReference type="EMBL" id="CP000880">
    <property type="protein sequence ID" value="ABX22012.1"/>
    <property type="molecule type" value="Genomic_DNA"/>
</dbReference>
<dbReference type="SMR" id="A9MJE9"/>
<dbReference type="STRING" id="41514.SARI_02135"/>
<dbReference type="KEGG" id="ses:SARI_02135"/>
<dbReference type="HOGENOM" id="CLU_014801_4_0_6"/>
<dbReference type="UniPathway" id="UPA00379">
    <property type="reaction ID" value="UER00549"/>
</dbReference>
<dbReference type="Proteomes" id="UP000002084">
    <property type="component" value="Chromosome"/>
</dbReference>
<dbReference type="GO" id="GO:0005737">
    <property type="term" value="C:cytoplasm"/>
    <property type="evidence" value="ECO:0007669"/>
    <property type="project" value="UniProtKB-SubCell"/>
</dbReference>
<dbReference type="GO" id="GO:0004397">
    <property type="term" value="F:histidine ammonia-lyase activity"/>
    <property type="evidence" value="ECO:0007669"/>
    <property type="project" value="UniProtKB-UniRule"/>
</dbReference>
<dbReference type="GO" id="GO:0019556">
    <property type="term" value="P:L-histidine catabolic process to glutamate and formamide"/>
    <property type="evidence" value="ECO:0007669"/>
    <property type="project" value="UniProtKB-UniPathway"/>
</dbReference>
<dbReference type="GO" id="GO:0019557">
    <property type="term" value="P:L-histidine catabolic process to glutamate and formate"/>
    <property type="evidence" value="ECO:0007669"/>
    <property type="project" value="UniProtKB-UniPathway"/>
</dbReference>
<dbReference type="CDD" id="cd00332">
    <property type="entry name" value="PAL-HAL"/>
    <property type="match status" value="1"/>
</dbReference>
<dbReference type="FunFam" id="1.10.275.10:FF:000005">
    <property type="entry name" value="Histidine ammonia-lyase"/>
    <property type="match status" value="1"/>
</dbReference>
<dbReference type="FunFam" id="1.20.200.10:FF:000003">
    <property type="entry name" value="Histidine ammonia-lyase"/>
    <property type="match status" value="1"/>
</dbReference>
<dbReference type="Gene3D" id="1.20.200.10">
    <property type="entry name" value="Fumarase/aspartase (Central domain)"/>
    <property type="match status" value="1"/>
</dbReference>
<dbReference type="Gene3D" id="1.10.275.10">
    <property type="entry name" value="Fumarase/aspartase (N-terminal domain)"/>
    <property type="match status" value="1"/>
</dbReference>
<dbReference type="HAMAP" id="MF_00229">
    <property type="entry name" value="His_ammonia_lyase"/>
    <property type="match status" value="1"/>
</dbReference>
<dbReference type="InterPro" id="IPR001106">
    <property type="entry name" value="Aromatic_Lyase"/>
</dbReference>
<dbReference type="InterPro" id="IPR024083">
    <property type="entry name" value="Fumarase/histidase_N"/>
</dbReference>
<dbReference type="InterPro" id="IPR005921">
    <property type="entry name" value="HutH"/>
</dbReference>
<dbReference type="InterPro" id="IPR008948">
    <property type="entry name" value="L-Aspartase-like"/>
</dbReference>
<dbReference type="InterPro" id="IPR022313">
    <property type="entry name" value="Phe/His_NH3-lyase_AS"/>
</dbReference>
<dbReference type="NCBIfam" id="TIGR01225">
    <property type="entry name" value="hutH"/>
    <property type="match status" value="1"/>
</dbReference>
<dbReference type="NCBIfam" id="NF006871">
    <property type="entry name" value="PRK09367.1"/>
    <property type="match status" value="1"/>
</dbReference>
<dbReference type="PANTHER" id="PTHR10362">
    <property type="entry name" value="HISTIDINE AMMONIA-LYASE"/>
    <property type="match status" value="1"/>
</dbReference>
<dbReference type="Pfam" id="PF00221">
    <property type="entry name" value="Lyase_aromatic"/>
    <property type="match status" value="1"/>
</dbReference>
<dbReference type="SUPFAM" id="SSF48557">
    <property type="entry name" value="L-aspartase-like"/>
    <property type="match status" value="1"/>
</dbReference>
<dbReference type="PROSITE" id="PS00488">
    <property type="entry name" value="PAL_HISTIDASE"/>
    <property type="match status" value="1"/>
</dbReference>
<gene>
    <name evidence="1" type="primary">hutH</name>
    <name type="ordered locus">SARI_02135</name>
</gene>
<organism>
    <name type="scientific">Salmonella arizonae (strain ATCC BAA-731 / CDC346-86 / RSK2980)</name>
    <dbReference type="NCBI Taxonomy" id="41514"/>
    <lineage>
        <taxon>Bacteria</taxon>
        <taxon>Pseudomonadati</taxon>
        <taxon>Pseudomonadota</taxon>
        <taxon>Gammaproteobacteria</taxon>
        <taxon>Enterobacterales</taxon>
        <taxon>Enterobacteriaceae</taxon>
        <taxon>Salmonella</taxon>
    </lineage>
</organism>
<protein>
    <recommendedName>
        <fullName evidence="1">Histidine ammonia-lyase</fullName>
        <shortName evidence="1">Histidase</shortName>
        <ecNumber evidence="1">4.3.1.3</ecNumber>
    </recommendedName>
</protein>
<name>HUTH_SALAR</name>
<accession>A9MJE9</accession>
<keyword id="KW-0963">Cytoplasm</keyword>
<keyword id="KW-0369">Histidine metabolism</keyword>
<keyword id="KW-0456">Lyase</keyword>
<keyword id="KW-1185">Reference proteome</keyword>
<proteinExistence type="inferred from homology"/>
<feature type="chain" id="PRO_1000078227" description="Histidine ammonia-lyase">
    <location>
        <begin position="1"/>
        <end position="506"/>
    </location>
</feature>
<feature type="modified residue" description="2,3-didehydroalanine (Ser)" evidence="1">
    <location>
        <position position="144"/>
    </location>
</feature>
<feature type="cross-link" description="5-imidazolinone (Ala-Gly)" evidence="1">
    <location>
        <begin position="143"/>
        <end position="145"/>
    </location>
</feature>
<comment type="catalytic activity">
    <reaction evidence="1">
        <text>L-histidine = trans-urocanate + NH4(+)</text>
        <dbReference type="Rhea" id="RHEA:21232"/>
        <dbReference type="ChEBI" id="CHEBI:17771"/>
        <dbReference type="ChEBI" id="CHEBI:28938"/>
        <dbReference type="ChEBI" id="CHEBI:57595"/>
        <dbReference type="EC" id="4.3.1.3"/>
    </reaction>
</comment>
<comment type="pathway">
    <text evidence="1">Amino-acid degradation; L-histidine degradation into L-glutamate; N-formimidoyl-L-glutamate from L-histidine: step 1/3.</text>
</comment>
<comment type="subcellular location">
    <subcellularLocation>
        <location evidence="1">Cytoplasm</location>
    </subcellularLocation>
</comment>
<comment type="PTM">
    <text evidence="1">Contains an active site 4-methylidene-imidazol-5-one (MIO), which is formed autocatalytically by cyclization and dehydration of residues Ala-Ser-Gly.</text>
</comment>
<comment type="similarity">
    <text evidence="1">Belongs to the PAL/histidase family.</text>
</comment>